<gene>
    <name evidence="1" type="primary">purH</name>
    <name type="ordered locus">XC_0510</name>
</gene>
<comment type="catalytic activity">
    <reaction evidence="1">
        <text>(6R)-10-formyltetrahydrofolate + 5-amino-1-(5-phospho-beta-D-ribosyl)imidazole-4-carboxamide = 5-formamido-1-(5-phospho-D-ribosyl)imidazole-4-carboxamide + (6S)-5,6,7,8-tetrahydrofolate</text>
        <dbReference type="Rhea" id="RHEA:22192"/>
        <dbReference type="ChEBI" id="CHEBI:57453"/>
        <dbReference type="ChEBI" id="CHEBI:58467"/>
        <dbReference type="ChEBI" id="CHEBI:58475"/>
        <dbReference type="ChEBI" id="CHEBI:195366"/>
        <dbReference type="EC" id="2.1.2.3"/>
    </reaction>
</comment>
<comment type="catalytic activity">
    <reaction evidence="1">
        <text>IMP + H2O = 5-formamido-1-(5-phospho-D-ribosyl)imidazole-4-carboxamide</text>
        <dbReference type="Rhea" id="RHEA:18445"/>
        <dbReference type="ChEBI" id="CHEBI:15377"/>
        <dbReference type="ChEBI" id="CHEBI:58053"/>
        <dbReference type="ChEBI" id="CHEBI:58467"/>
        <dbReference type="EC" id="3.5.4.10"/>
    </reaction>
</comment>
<comment type="pathway">
    <text evidence="1">Purine metabolism; IMP biosynthesis via de novo pathway; 5-formamido-1-(5-phospho-D-ribosyl)imidazole-4-carboxamide from 5-amino-1-(5-phospho-D-ribosyl)imidazole-4-carboxamide (10-formyl THF route): step 1/1.</text>
</comment>
<comment type="pathway">
    <text evidence="1">Purine metabolism; IMP biosynthesis via de novo pathway; IMP from 5-formamido-1-(5-phospho-D-ribosyl)imidazole-4-carboxamide: step 1/1.</text>
</comment>
<comment type="domain">
    <text evidence="1">The IMP cyclohydrolase activity resides in the N-terminal region.</text>
</comment>
<comment type="similarity">
    <text evidence="1">Belongs to the PurH family.</text>
</comment>
<evidence type="ECO:0000255" key="1">
    <source>
        <dbReference type="HAMAP-Rule" id="MF_00139"/>
    </source>
</evidence>
<evidence type="ECO:0000255" key="2">
    <source>
        <dbReference type="PROSITE-ProRule" id="PRU01202"/>
    </source>
</evidence>
<protein>
    <recommendedName>
        <fullName evidence="1">Bifunctional purine biosynthesis protein PurH</fullName>
    </recommendedName>
    <domain>
        <recommendedName>
            <fullName evidence="1">Phosphoribosylaminoimidazolecarboxamide formyltransferase</fullName>
            <ecNumber evidence="1">2.1.2.3</ecNumber>
        </recommendedName>
        <alternativeName>
            <fullName evidence="1">AICAR transformylase</fullName>
        </alternativeName>
    </domain>
    <domain>
        <recommendedName>
            <fullName evidence="1">IMP cyclohydrolase</fullName>
            <ecNumber evidence="1">3.5.4.10</ecNumber>
        </recommendedName>
        <alternativeName>
            <fullName evidence="1">ATIC</fullName>
        </alternativeName>
        <alternativeName>
            <fullName evidence="1">IMP synthase</fullName>
        </alternativeName>
        <alternativeName>
            <fullName evidence="1">Inosinicase</fullName>
        </alternativeName>
    </domain>
</protein>
<proteinExistence type="inferred from homology"/>
<keyword id="KW-0378">Hydrolase</keyword>
<keyword id="KW-0511">Multifunctional enzyme</keyword>
<keyword id="KW-0658">Purine biosynthesis</keyword>
<keyword id="KW-0808">Transferase</keyword>
<feature type="chain" id="PRO_1000018987" description="Bifunctional purine biosynthesis protein PurH">
    <location>
        <begin position="1"/>
        <end position="527"/>
    </location>
</feature>
<feature type="domain" description="MGS-like" evidence="2">
    <location>
        <begin position="1"/>
        <end position="149"/>
    </location>
</feature>
<reference key="1">
    <citation type="journal article" date="2005" name="Genome Res.">
        <title>Comparative and functional genomic analyses of the pathogenicity of phytopathogen Xanthomonas campestris pv. campestris.</title>
        <authorList>
            <person name="Qian W."/>
            <person name="Jia Y."/>
            <person name="Ren S.-X."/>
            <person name="He Y.-Q."/>
            <person name="Feng J.-X."/>
            <person name="Lu L.-F."/>
            <person name="Sun Q."/>
            <person name="Ying G."/>
            <person name="Tang D.-J."/>
            <person name="Tang H."/>
            <person name="Wu W."/>
            <person name="Hao P."/>
            <person name="Wang L."/>
            <person name="Jiang B.-L."/>
            <person name="Zeng S."/>
            <person name="Gu W.-Y."/>
            <person name="Lu G."/>
            <person name="Rong L."/>
            <person name="Tian Y."/>
            <person name="Yao Z."/>
            <person name="Fu G."/>
            <person name="Chen B."/>
            <person name="Fang R."/>
            <person name="Qiang B."/>
            <person name="Chen Z."/>
            <person name="Zhao G.-P."/>
            <person name="Tang J.-L."/>
            <person name="He C."/>
        </authorList>
    </citation>
    <scope>NUCLEOTIDE SEQUENCE [LARGE SCALE GENOMIC DNA]</scope>
    <source>
        <strain>8004</strain>
    </source>
</reference>
<sequence length="527" mass="55656">MASDFLPVRRALLSVSDKTGLIDLARALVARNVELLSTGGTAKAIRDAGLPVKDVAELTGFPEMMDGRVKTLHPLVHGGLLGRAGVDEAVMAEHGIAPIDLLVLNLYPFESVTAKADCTLADAVENIDIGGPAMLRSAAKNFARVAVATDPAQYADLLAELEANNGQLSAAQRFALSVAAFNRVAQYDAAISNYLSAVADSAESVPTRSPFPAQINSNFIKVMDLRYGENPHQSGAFYRDLYPVPGTLATFQQLQGKELSYNNLADADAAWECVRQFDAPACVIVKHANPCGVAVGVACGDAYELAYATDPTSAFGGILAFNRTLDAATAKAILDRQFVEVLIAPDYEPGALDYATKKANVRVLKIPHGAGLNNYDTKRIGSGLLMQSADNRGMSLGELSVVTKRAPSDAELADLLFAWRVAKYVKSNAIVYAKDSRTIGVGAGQMSRVVSAKIAALKAEEAKLTVAGSVMASDAFFPFRDGIDAAAAAGIQAVIQPGGSMRDGEVIAAADEHGLAMVFTGVRHFRH</sequence>
<dbReference type="EC" id="2.1.2.3" evidence="1"/>
<dbReference type="EC" id="3.5.4.10" evidence="1"/>
<dbReference type="EMBL" id="CP000050">
    <property type="protein sequence ID" value="AAY47591.1"/>
    <property type="molecule type" value="Genomic_DNA"/>
</dbReference>
<dbReference type="RefSeq" id="WP_011035747.1">
    <property type="nucleotide sequence ID" value="NZ_CP155948.1"/>
</dbReference>
<dbReference type="SMR" id="Q4UZD2"/>
<dbReference type="KEGG" id="xcb:XC_0510"/>
<dbReference type="HOGENOM" id="CLU_016316_5_2_6"/>
<dbReference type="UniPathway" id="UPA00074">
    <property type="reaction ID" value="UER00133"/>
</dbReference>
<dbReference type="UniPathway" id="UPA00074">
    <property type="reaction ID" value="UER00135"/>
</dbReference>
<dbReference type="Proteomes" id="UP000000420">
    <property type="component" value="Chromosome"/>
</dbReference>
<dbReference type="GO" id="GO:0005829">
    <property type="term" value="C:cytosol"/>
    <property type="evidence" value="ECO:0007669"/>
    <property type="project" value="TreeGrafter"/>
</dbReference>
<dbReference type="GO" id="GO:0003937">
    <property type="term" value="F:IMP cyclohydrolase activity"/>
    <property type="evidence" value="ECO:0007669"/>
    <property type="project" value="UniProtKB-UniRule"/>
</dbReference>
<dbReference type="GO" id="GO:0004643">
    <property type="term" value="F:phosphoribosylaminoimidazolecarboxamide formyltransferase activity"/>
    <property type="evidence" value="ECO:0007669"/>
    <property type="project" value="UniProtKB-UniRule"/>
</dbReference>
<dbReference type="GO" id="GO:0006189">
    <property type="term" value="P:'de novo' IMP biosynthetic process"/>
    <property type="evidence" value="ECO:0007669"/>
    <property type="project" value="UniProtKB-UniRule"/>
</dbReference>
<dbReference type="CDD" id="cd01421">
    <property type="entry name" value="IMPCH"/>
    <property type="match status" value="1"/>
</dbReference>
<dbReference type="FunFam" id="3.40.140.20:FF:000001">
    <property type="entry name" value="Bifunctional purine biosynthesis protein PurH"/>
    <property type="match status" value="1"/>
</dbReference>
<dbReference type="FunFam" id="3.40.140.20:FF:000002">
    <property type="entry name" value="Bifunctional purine biosynthesis protein PurH"/>
    <property type="match status" value="1"/>
</dbReference>
<dbReference type="FunFam" id="3.40.50.1380:FF:000001">
    <property type="entry name" value="Bifunctional purine biosynthesis protein PurH"/>
    <property type="match status" value="1"/>
</dbReference>
<dbReference type="Gene3D" id="3.40.140.20">
    <property type="match status" value="2"/>
</dbReference>
<dbReference type="Gene3D" id="3.40.50.1380">
    <property type="entry name" value="Methylglyoxal synthase-like domain"/>
    <property type="match status" value="1"/>
</dbReference>
<dbReference type="HAMAP" id="MF_00139">
    <property type="entry name" value="PurH"/>
    <property type="match status" value="1"/>
</dbReference>
<dbReference type="InterPro" id="IPR024051">
    <property type="entry name" value="AICAR_Tfase_dup_dom_sf"/>
</dbReference>
<dbReference type="InterPro" id="IPR016193">
    <property type="entry name" value="Cytidine_deaminase-like"/>
</dbReference>
<dbReference type="InterPro" id="IPR011607">
    <property type="entry name" value="MGS-like_dom"/>
</dbReference>
<dbReference type="InterPro" id="IPR036914">
    <property type="entry name" value="MGS-like_dom_sf"/>
</dbReference>
<dbReference type="InterPro" id="IPR002695">
    <property type="entry name" value="PurH-like"/>
</dbReference>
<dbReference type="NCBIfam" id="NF002049">
    <property type="entry name" value="PRK00881.1"/>
    <property type="match status" value="1"/>
</dbReference>
<dbReference type="NCBIfam" id="TIGR00355">
    <property type="entry name" value="purH"/>
    <property type="match status" value="1"/>
</dbReference>
<dbReference type="PANTHER" id="PTHR11692:SF0">
    <property type="entry name" value="BIFUNCTIONAL PURINE BIOSYNTHESIS PROTEIN ATIC"/>
    <property type="match status" value="1"/>
</dbReference>
<dbReference type="PANTHER" id="PTHR11692">
    <property type="entry name" value="BIFUNCTIONAL PURINE BIOSYNTHESIS PROTEIN PURH"/>
    <property type="match status" value="1"/>
</dbReference>
<dbReference type="Pfam" id="PF01808">
    <property type="entry name" value="AICARFT_IMPCHas"/>
    <property type="match status" value="1"/>
</dbReference>
<dbReference type="Pfam" id="PF02142">
    <property type="entry name" value="MGS"/>
    <property type="match status" value="1"/>
</dbReference>
<dbReference type="PIRSF" id="PIRSF000414">
    <property type="entry name" value="AICARFT_IMPCHas"/>
    <property type="match status" value="1"/>
</dbReference>
<dbReference type="SMART" id="SM00798">
    <property type="entry name" value="AICARFT_IMPCHas"/>
    <property type="match status" value="1"/>
</dbReference>
<dbReference type="SMART" id="SM00851">
    <property type="entry name" value="MGS"/>
    <property type="match status" value="1"/>
</dbReference>
<dbReference type="SUPFAM" id="SSF53927">
    <property type="entry name" value="Cytidine deaminase-like"/>
    <property type="match status" value="1"/>
</dbReference>
<dbReference type="SUPFAM" id="SSF52335">
    <property type="entry name" value="Methylglyoxal synthase-like"/>
    <property type="match status" value="1"/>
</dbReference>
<dbReference type="PROSITE" id="PS51855">
    <property type="entry name" value="MGS"/>
    <property type="match status" value="1"/>
</dbReference>
<organism>
    <name type="scientific">Xanthomonas campestris pv. campestris (strain 8004)</name>
    <dbReference type="NCBI Taxonomy" id="314565"/>
    <lineage>
        <taxon>Bacteria</taxon>
        <taxon>Pseudomonadati</taxon>
        <taxon>Pseudomonadota</taxon>
        <taxon>Gammaproteobacteria</taxon>
        <taxon>Lysobacterales</taxon>
        <taxon>Lysobacteraceae</taxon>
        <taxon>Xanthomonas</taxon>
    </lineage>
</organism>
<name>PUR9_XANC8</name>
<accession>Q4UZD2</accession>